<comment type="function">
    <text evidence="1">Catalyzes the dephosphorylation of undecaprenyl diphosphate (UPP). Confers resistance to bacitracin.</text>
</comment>
<comment type="catalytic activity">
    <reaction evidence="1">
        <text>di-trans,octa-cis-undecaprenyl diphosphate + H2O = di-trans,octa-cis-undecaprenyl phosphate + phosphate + H(+)</text>
        <dbReference type="Rhea" id="RHEA:28094"/>
        <dbReference type="ChEBI" id="CHEBI:15377"/>
        <dbReference type="ChEBI" id="CHEBI:15378"/>
        <dbReference type="ChEBI" id="CHEBI:43474"/>
        <dbReference type="ChEBI" id="CHEBI:58405"/>
        <dbReference type="ChEBI" id="CHEBI:60392"/>
        <dbReference type="EC" id="3.6.1.27"/>
    </reaction>
</comment>
<comment type="subcellular location">
    <subcellularLocation>
        <location evidence="1">Cell inner membrane</location>
        <topology evidence="1">Multi-pass membrane protein</topology>
    </subcellularLocation>
</comment>
<comment type="miscellaneous">
    <text>Bacitracin is thought to be involved in the inhibition of peptidoglycan synthesis by sequestering undecaprenyl diphosphate, thereby reducing the pool of lipid carrier available.</text>
</comment>
<comment type="similarity">
    <text evidence="1">Belongs to the UppP family.</text>
</comment>
<organism>
    <name type="scientific">Vibrio atlanticus (strain LGP32)</name>
    <name type="common">Vibrio splendidus (strain Mel32)</name>
    <dbReference type="NCBI Taxonomy" id="575788"/>
    <lineage>
        <taxon>Bacteria</taxon>
        <taxon>Pseudomonadati</taxon>
        <taxon>Pseudomonadota</taxon>
        <taxon>Gammaproteobacteria</taxon>
        <taxon>Vibrionales</taxon>
        <taxon>Vibrionaceae</taxon>
        <taxon>Vibrio</taxon>
    </lineage>
</organism>
<sequence>MSYFEAFMLALVQGFTEFLPISSSAHLILPSAVLGWEDQGLAFDVAVHVGTLAAVVIYFRKEVVSLLSAFFGSVFKGDRSKEAKLAWMIILATIPACIFGLLMKDIVELYLRSAWVIATTTIIFGLLLWWVDKNSSLRDDEYQAGWKKALFIGLAQAMAIIPGTSRSGATITAALYLGFTREAAARFSFLMSIPIITLAGGYLGLKLVTSGDPIHVGTLLTGIVVSFISAYICIHFFLKLISRMGMTPFVIYRLILGFGLFAFLMMQ</sequence>
<proteinExistence type="inferred from homology"/>
<feature type="chain" id="PRO_1000148837" description="Undecaprenyl-diphosphatase">
    <location>
        <begin position="1"/>
        <end position="267"/>
    </location>
</feature>
<feature type="transmembrane region" description="Helical" evidence="1">
    <location>
        <begin position="1"/>
        <end position="21"/>
    </location>
</feature>
<feature type="transmembrane region" description="Helical" evidence="1">
    <location>
        <begin position="39"/>
        <end position="59"/>
    </location>
</feature>
<feature type="transmembrane region" description="Helical" evidence="1">
    <location>
        <begin position="83"/>
        <end position="103"/>
    </location>
</feature>
<feature type="transmembrane region" description="Helical" evidence="1">
    <location>
        <begin position="111"/>
        <end position="131"/>
    </location>
</feature>
<feature type="transmembrane region" description="Helical" evidence="1">
    <location>
        <begin position="144"/>
        <end position="164"/>
    </location>
</feature>
<feature type="transmembrane region" description="Helical" evidence="1">
    <location>
        <begin position="189"/>
        <end position="209"/>
    </location>
</feature>
<feature type="transmembrane region" description="Helical" evidence="1">
    <location>
        <begin position="218"/>
        <end position="238"/>
    </location>
</feature>
<feature type="transmembrane region" description="Helical" evidence="1">
    <location>
        <begin position="246"/>
        <end position="266"/>
    </location>
</feature>
<dbReference type="EC" id="3.6.1.27" evidence="1"/>
<dbReference type="EMBL" id="FM954972">
    <property type="protein sequence ID" value="CAV17414.1"/>
    <property type="molecule type" value="Genomic_DNA"/>
</dbReference>
<dbReference type="SMR" id="B7VIW0"/>
<dbReference type="STRING" id="575788.VS_0406"/>
<dbReference type="KEGG" id="vsp:VS_0406"/>
<dbReference type="eggNOG" id="COG1968">
    <property type="taxonomic scope" value="Bacteria"/>
</dbReference>
<dbReference type="HOGENOM" id="CLU_060296_1_0_6"/>
<dbReference type="Proteomes" id="UP000009100">
    <property type="component" value="Chromosome 1"/>
</dbReference>
<dbReference type="GO" id="GO:0005886">
    <property type="term" value="C:plasma membrane"/>
    <property type="evidence" value="ECO:0007669"/>
    <property type="project" value="UniProtKB-SubCell"/>
</dbReference>
<dbReference type="GO" id="GO:0050380">
    <property type="term" value="F:undecaprenyl-diphosphatase activity"/>
    <property type="evidence" value="ECO:0007669"/>
    <property type="project" value="UniProtKB-UniRule"/>
</dbReference>
<dbReference type="GO" id="GO:0071555">
    <property type="term" value="P:cell wall organization"/>
    <property type="evidence" value="ECO:0007669"/>
    <property type="project" value="UniProtKB-KW"/>
</dbReference>
<dbReference type="GO" id="GO:0009252">
    <property type="term" value="P:peptidoglycan biosynthetic process"/>
    <property type="evidence" value="ECO:0007669"/>
    <property type="project" value="UniProtKB-KW"/>
</dbReference>
<dbReference type="GO" id="GO:0008360">
    <property type="term" value="P:regulation of cell shape"/>
    <property type="evidence" value="ECO:0007669"/>
    <property type="project" value="UniProtKB-KW"/>
</dbReference>
<dbReference type="GO" id="GO:0046677">
    <property type="term" value="P:response to antibiotic"/>
    <property type="evidence" value="ECO:0007669"/>
    <property type="project" value="UniProtKB-UniRule"/>
</dbReference>
<dbReference type="HAMAP" id="MF_01006">
    <property type="entry name" value="Undec_diphosphatase"/>
    <property type="match status" value="1"/>
</dbReference>
<dbReference type="InterPro" id="IPR003824">
    <property type="entry name" value="UppP"/>
</dbReference>
<dbReference type="NCBIfam" id="NF001393">
    <property type="entry name" value="PRK00281.2-4"/>
    <property type="match status" value="1"/>
</dbReference>
<dbReference type="NCBIfam" id="TIGR00753">
    <property type="entry name" value="undec_PP_bacA"/>
    <property type="match status" value="1"/>
</dbReference>
<dbReference type="PANTHER" id="PTHR30622">
    <property type="entry name" value="UNDECAPRENYL-DIPHOSPHATASE"/>
    <property type="match status" value="1"/>
</dbReference>
<dbReference type="PANTHER" id="PTHR30622:SF4">
    <property type="entry name" value="UNDECAPRENYL-DIPHOSPHATASE"/>
    <property type="match status" value="1"/>
</dbReference>
<dbReference type="Pfam" id="PF02673">
    <property type="entry name" value="BacA"/>
    <property type="match status" value="1"/>
</dbReference>
<gene>
    <name evidence="1" type="primary">uppP</name>
    <name type="ordered locus">VS_0406</name>
</gene>
<keyword id="KW-0046">Antibiotic resistance</keyword>
<keyword id="KW-0997">Cell inner membrane</keyword>
<keyword id="KW-1003">Cell membrane</keyword>
<keyword id="KW-0133">Cell shape</keyword>
<keyword id="KW-0961">Cell wall biogenesis/degradation</keyword>
<keyword id="KW-0378">Hydrolase</keyword>
<keyword id="KW-0472">Membrane</keyword>
<keyword id="KW-0573">Peptidoglycan synthesis</keyword>
<keyword id="KW-0812">Transmembrane</keyword>
<keyword id="KW-1133">Transmembrane helix</keyword>
<name>UPPP_VIBA3</name>
<evidence type="ECO:0000255" key="1">
    <source>
        <dbReference type="HAMAP-Rule" id="MF_01006"/>
    </source>
</evidence>
<accession>B7VIW0</accession>
<reference key="1">
    <citation type="submission" date="2009-02" db="EMBL/GenBank/DDBJ databases">
        <title>Vibrio splendidus str. LGP32 complete genome.</title>
        <authorList>
            <person name="Mazel D."/>
            <person name="Le Roux F."/>
        </authorList>
    </citation>
    <scope>NUCLEOTIDE SEQUENCE [LARGE SCALE GENOMIC DNA]</scope>
    <source>
        <strain>LGP32</strain>
    </source>
</reference>
<protein>
    <recommendedName>
        <fullName evidence="1">Undecaprenyl-diphosphatase</fullName>
        <ecNumber evidence="1">3.6.1.27</ecNumber>
    </recommendedName>
    <alternativeName>
        <fullName evidence="1">Bacitracin resistance protein</fullName>
    </alternativeName>
    <alternativeName>
        <fullName evidence="1">Undecaprenyl pyrophosphate phosphatase</fullName>
    </alternativeName>
</protein>